<protein>
    <recommendedName>
        <fullName evidence="1">Ribosome maturation factor RimP</fullName>
    </recommendedName>
</protein>
<feature type="chain" id="PRO_1000064735" description="Ribosome maturation factor RimP">
    <location>
        <begin position="1"/>
        <end position="183"/>
    </location>
</feature>
<evidence type="ECO:0000255" key="1">
    <source>
        <dbReference type="HAMAP-Rule" id="MF_01077"/>
    </source>
</evidence>
<accession>A1KMI5</accession>
<comment type="function">
    <text evidence="1">Required for maturation of 30S ribosomal subunits.</text>
</comment>
<comment type="subcellular location">
    <subcellularLocation>
        <location evidence="1">Cytoplasm</location>
    </subcellularLocation>
</comment>
<comment type="similarity">
    <text evidence="1">Belongs to the RimP family.</text>
</comment>
<organism>
    <name type="scientific">Mycobacterium bovis (strain BCG / Pasteur 1173P2)</name>
    <dbReference type="NCBI Taxonomy" id="410289"/>
    <lineage>
        <taxon>Bacteria</taxon>
        <taxon>Bacillati</taxon>
        <taxon>Actinomycetota</taxon>
        <taxon>Actinomycetes</taxon>
        <taxon>Mycobacteriales</taxon>
        <taxon>Mycobacteriaceae</taxon>
        <taxon>Mycobacterium</taxon>
        <taxon>Mycobacterium tuberculosis complex</taxon>
    </lineage>
</organism>
<proteinExistence type="inferred from homology"/>
<name>RIMP_MYCBP</name>
<gene>
    <name evidence="1" type="primary">rimP</name>
    <name type="ordered locus">BCG_2862c</name>
</gene>
<sequence length="183" mass="19565">MTTGLPSQRQVIELLGADFACAGYEIEDVVIDARARPPRIAVIADGDAPLDLDTIAALSRRASALLDGLDGANKIRGRYLLEVSSPGVERPLTSEKHFRRARGRKVELVLSDGSRLTGRVGEMRAGTVALVIREDRGWAVREIPLAEIVKAVVQVEFSPPAPAELELAQSSEMGLARGTEAGA</sequence>
<keyword id="KW-0963">Cytoplasm</keyword>
<keyword id="KW-0690">Ribosome biogenesis</keyword>
<dbReference type="EMBL" id="AM408590">
    <property type="protein sequence ID" value="CAL72851.1"/>
    <property type="molecule type" value="Genomic_DNA"/>
</dbReference>
<dbReference type="RefSeq" id="WP_003899507.1">
    <property type="nucleotide sequence ID" value="NC_008769.1"/>
</dbReference>
<dbReference type="SMR" id="A1KMI5"/>
<dbReference type="GeneID" id="45426829"/>
<dbReference type="KEGG" id="mbb:BCG_2862c"/>
<dbReference type="HOGENOM" id="CLU_070525_3_0_11"/>
<dbReference type="Proteomes" id="UP000001472">
    <property type="component" value="Chromosome"/>
</dbReference>
<dbReference type="GO" id="GO:0005829">
    <property type="term" value="C:cytosol"/>
    <property type="evidence" value="ECO:0007669"/>
    <property type="project" value="TreeGrafter"/>
</dbReference>
<dbReference type="GO" id="GO:0000028">
    <property type="term" value="P:ribosomal small subunit assembly"/>
    <property type="evidence" value="ECO:0007669"/>
    <property type="project" value="TreeGrafter"/>
</dbReference>
<dbReference type="GO" id="GO:0006412">
    <property type="term" value="P:translation"/>
    <property type="evidence" value="ECO:0007669"/>
    <property type="project" value="TreeGrafter"/>
</dbReference>
<dbReference type="CDD" id="cd01734">
    <property type="entry name" value="YlxS_C"/>
    <property type="match status" value="1"/>
</dbReference>
<dbReference type="Gene3D" id="3.30.300.70">
    <property type="entry name" value="RimP-like superfamily, N-terminal"/>
    <property type="match status" value="1"/>
</dbReference>
<dbReference type="HAMAP" id="MF_01077">
    <property type="entry name" value="RimP"/>
    <property type="match status" value="1"/>
</dbReference>
<dbReference type="InterPro" id="IPR003728">
    <property type="entry name" value="Ribosome_maturation_RimP"/>
</dbReference>
<dbReference type="InterPro" id="IPR028998">
    <property type="entry name" value="RimP_C"/>
</dbReference>
<dbReference type="InterPro" id="IPR036847">
    <property type="entry name" value="RimP_C_sf"/>
</dbReference>
<dbReference type="InterPro" id="IPR028989">
    <property type="entry name" value="RimP_N"/>
</dbReference>
<dbReference type="InterPro" id="IPR035956">
    <property type="entry name" value="RimP_N_sf"/>
</dbReference>
<dbReference type="NCBIfam" id="NF000930">
    <property type="entry name" value="PRK00092.2-2"/>
    <property type="match status" value="1"/>
</dbReference>
<dbReference type="PANTHER" id="PTHR33867">
    <property type="entry name" value="RIBOSOME MATURATION FACTOR RIMP"/>
    <property type="match status" value="1"/>
</dbReference>
<dbReference type="PANTHER" id="PTHR33867:SF1">
    <property type="entry name" value="RIBOSOME MATURATION FACTOR RIMP"/>
    <property type="match status" value="1"/>
</dbReference>
<dbReference type="Pfam" id="PF17384">
    <property type="entry name" value="DUF150_C"/>
    <property type="match status" value="1"/>
</dbReference>
<dbReference type="Pfam" id="PF02576">
    <property type="entry name" value="RimP_N"/>
    <property type="match status" value="1"/>
</dbReference>
<dbReference type="SUPFAM" id="SSF74942">
    <property type="entry name" value="YhbC-like, C-terminal domain"/>
    <property type="match status" value="1"/>
</dbReference>
<dbReference type="SUPFAM" id="SSF75420">
    <property type="entry name" value="YhbC-like, N-terminal domain"/>
    <property type="match status" value="1"/>
</dbReference>
<reference key="1">
    <citation type="journal article" date="2007" name="Proc. Natl. Acad. Sci. U.S.A.">
        <title>Genome plasticity of BCG and impact on vaccine efficacy.</title>
        <authorList>
            <person name="Brosch R."/>
            <person name="Gordon S.V."/>
            <person name="Garnier T."/>
            <person name="Eiglmeier K."/>
            <person name="Frigui W."/>
            <person name="Valenti P."/>
            <person name="Dos Santos S."/>
            <person name="Duthoy S."/>
            <person name="Lacroix C."/>
            <person name="Garcia-Pelayo C."/>
            <person name="Inwald J.K."/>
            <person name="Golby P."/>
            <person name="Garcia J.N."/>
            <person name="Hewinson R.G."/>
            <person name="Behr M.A."/>
            <person name="Quail M.A."/>
            <person name="Churcher C."/>
            <person name="Barrell B.G."/>
            <person name="Parkhill J."/>
            <person name="Cole S.T."/>
        </authorList>
    </citation>
    <scope>NUCLEOTIDE SEQUENCE [LARGE SCALE GENOMIC DNA]</scope>
    <source>
        <strain>BCG / Pasteur 1173P2</strain>
    </source>
</reference>